<reference key="1">
    <citation type="submission" date="2009-01" db="EMBL/GenBank/DDBJ databases">
        <title>Complete sequence of Diaphorobacter sp. TPSY.</title>
        <authorList>
            <consortium name="US DOE Joint Genome Institute"/>
            <person name="Lucas S."/>
            <person name="Copeland A."/>
            <person name="Lapidus A."/>
            <person name="Glavina del Rio T."/>
            <person name="Tice H."/>
            <person name="Bruce D."/>
            <person name="Goodwin L."/>
            <person name="Pitluck S."/>
            <person name="Chertkov O."/>
            <person name="Brettin T."/>
            <person name="Detter J.C."/>
            <person name="Han C."/>
            <person name="Larimer F."/>
            <person name="Land M."/>
            <person name="Hauser L."/>
            <person name="Kyrpides N."/>
            <person name="Mikhailova N."/>
            <person name="Coates J.D."/>
        </authorList>
    </citation>
    <scope>NUCLEOTIDE SEQUENCE [LARGE SCALE GENOMIC DNA]</scope>
    <source>
        <strain>TPSY</strain>
    </source>
</reference>
<organism>
    <name type="scientific">Acidovorax ebreus (strain TPSY)</name>
    <name type="common">Diaphorobacter sp. (strain TPSY)</name>
    <dbReference type="NCBI Taxonomy" id="535289"/>
    <lineage>
        <taxon>Bacteria</taxon>
        <taxon>Pseudomonadati</taxon>
        <taxon>Pseudomonadota</taxon>
        <taxon>Betaproteobacteria</taxon>
        <taxon>Burkholderiales</taxon>
        <taxon>Comamonadaceae</taxon>
        <taxon>Diaphorobacter</taxon>
    </lineage>
</organism>
<comment type="function">
    <text evidence="1">Catalyzes the condensation of the acetyl group of acetyl-CoA with 3-methyl-2-oxobutanoate (2-ketoisovalerate) to form 3-carboxy-3-hydroxy-4-methylpentanoate (2-isopropylmalate).</text>
</comment>
<comment type="catalytic activity">
    <reaction evidence="1">
        <text>3-methyl-2-oxobutanoate + acetyl-CoA + H2O = (2S)-2-isopropylmalate + CoA + H(+)</text>
        <dbReference type="Rhea" id="RHEA:21524"/>
        <dbReference type="ChEBI" id="CHEBI:1178"/>
        <dbReference type="ChEBI" id="CHEBI:11851"/>
        <dbReference type="ChEBI" id="CHEBI:15377"/>
        <dbReference type="ChEBI" id="CHEBI:15378"/>
        <dbReference type="ChEBI" id="CHEBI:57287"/>
        <dbReference type="ChEBI" id="CHEBI:57288"/>
        <dbReference type="EC" id="2.3.3.13"/>
    </reaction>
</comment>
<comment type="cofactor">
    <cofactor evidence="1">
        <name>Mn(2+)</name>
        <dbReference type="ChEBI" id="CHEBI:29035"/>
    </cofactor>
</comment>
<comment type="pathway">
    <text evidence="1">Amino-acid biosynthesis; L-leucine biosynthesis; L-leucine from 3-methyl-2-oxobutanoate: step 1/4.</text>
</comment>
<comment type="subunit">
    <text evidence="1">Homodimer.</text>
</comment>
<comment type="subcellular location">
    <subcellularLocation>
        <location evidence="1">Cytoplasm</location>
    </subcellularLocation>
</comment>
<comment type="similarity">
    <text evidence="1">Belongs to the alpha-IPM synthase/homocitrate synthase family. LeuA type 1 subfamily.</text>
</comment>
<feature type="chain" id="PRO_1000149179" description="2-isopropylmalate synthase">
    <location>
        <begin position="1"/>
        <end position="512"/>
    </location>
</feature>
<feature type="domain" description="Pyruvate carboxyltransferase" evidence="1">
    <location>
        <begin position="5"/>
        <end position="268"/>
    </location>
</feature>
<feature type="region of interest" description="Regulatory domain" evidence="1">
    <location>
        <begin position="394"/>
        <end position="512"/>
    </location>
</feature>
<feature type="binding site" evidence="1">
    <location>
        <position position="14"/>
    </location>
    <ligand>
        <name>Mn(2+)</name>
        <dbReference type="ChEBI" id="CHEBI:29035"/>
    </ligand>
</feature>
<feature type="binding site" evidence="1">
    <location>
        <position position="202"/>
    </location>
    <ligand>
        <name>Mn(2+)</name>
        <dbReference type="ChEBI" id="CHEBI:29035"/>
    </ligand>
</feature>
<feature type="binding site" evidence="1">
    <location>
        <position position="204"/>
    </location>
    <ligand>
        <name>Mn(2+)</name>
        <dbReference type="ChEBI" id="CHEBI:29035"/>
    </ligand>
</feature>
<feature type="binding site" evidence="1">
    <location>
        <position position="239"/>
    </location>
    <ligand>
        <name>Mn(2+)</name>
        <dbReference type="ChEBI" id="CHEBI:29035"/>
    </ligand>
</feature>
<dbReference type="EC" id="2.3.3.13" evidence="1"/>
<dbReference type="EMBL" id="CP001392">
    <property type="protein sequence ID" value="ACM33404.1"/>
    <property type="molecule type" value="Genomic_DNA"/>
</dbReference>
<dbReference type="RefSeq" id="WP_015913456.1">
    <property type="nucleotide sequence ID" value="NC_011992.1"/>
</dbReference>
<dbReference type="SMR" id="B9MA32"/>
<dbReference type="KEGG" id="dia:Dtpsy_1948"/>
<dbReference type="eggNOG" id="COG0119">
    <property type="taxonomic scope" value="Bacteria"/>
</dbReference>
<dbReference type="HOGENOM" id="CLU_022158_0_1_4"/>
<dbReference type="UniPathway" id="UPA00048">
    <property type="reaction ID" value="UER00070"/>
</dbReference>
<dbReference type="Proteomes" id="UP000000450">
    <property type="component" value="Chromosome"/>
</dbReference>
<dbReference type="GO" id="GO:0005829">
    <property type="term" value="C:cytosol"/>
    <property type="evidence" value="ECO:0007669"/>
    <property type="project" value="TreeGrafter"/>
</dbReference>
<dbReference type="GO" id="GO:0003852">
    <property type="term" value="F:2-isopropylmalate synthase activity"/>
    <property type="evidence" value="ECO:0007669"/>
    <property type="project" value="UniProtKB-UniRule"/>
</dbReference>
<dbReference type="GO" id="GO:0003985">
    <property type="term" value="F:acetyl-CoA C-acetyltransferase activity"/>
    <property type="evidence" value="ECO:0007669"/>
    <property type="project" value="UniProtKB-UniRule"/>
</dbReference>
<dbReference type="GO" id="GO:0030145">
    <property type="term" value="F:manganese ion binding"/>
    <property type="evidence" value="ECO:0007669"/>
    <property type="project" value="UniProtKB-UniRule"/>
</dbReference>
<dbReference type="GO" id="GO:0009098">
    <property type="term" value="P:L-leucine biosynthetic process"/>
    <property type="evidence" value="ECO:0007669"/>
    <property type="project" value="UniProtKB-UniRule"/>
</dbReference>
<dbReference type="CDD" id="cd07940">
    <property type="entry name" value="DRE_TIM_IPMS"/>
    <property type="match status" value="1"/>
</dbReference>
<dbReference type="FunFam" id="1.10.238.260:FF:000001">
    <property type="entry name" value="2-isopropylmalate synthase"/>
    <property type="match status" value="1"/>
</dbReference>
<dbReference type="FunFam" id="3.20.20.70:FF:000010">
    <property type="entry name" value="2-isopropylmalate synthase"/>
    <property type="match status" value="1"/>
</dbReference>
<dbReference type="FunFam" id="3.30.160.270:FF:000003">
    <property type="entry name" value="2-isopropylmalate synthase"/>
    <property type="match status" value="1"/>
</dbReference>
<dbReference type="Gene3D" id="1.10.238.260">
    <property type="match status" value="1"/>
</dbReference>
<dbReference type="Gene3D" id="3.30.160.270">
    <property type="match status" value="1"/>
</dbReference>
<dbReference type="Gene3D" id="3.20.20.70">
    <property type="entry name" value="Aldolase class I"/>
    <property type="match status" value="1"/>
</dbReference>
<dbReference type="HAMAP" id="MF_01025">
    <property type="entry name" value="LeuA_type1"/>
    <property type="match status" value="1"/>
</dbReference>
<dbReference type="InterPro" id="IPR050073">
    <property type="entry name" value="2-IPM_HCS-like"/>
</dbReference>
<dbReference type="InterPro" id="IPR013709">
    <property type="entry name" value="2-isopropylmalate_synth_dimer"/>
</dbReference>
<dbReference type="InterPro" id="IPR002034">
    <property type="entry name" value="AIPM/Hcit_synth_CS"/>
</dbReference>
<dbReference type="InterPro" id="IPR013785">
    <property type="entry name" value="Aldolase_TIM"/>
</dbReference>
<dbReference type="InterPro" id="IPR054691">
    <property type="entry name" value="LeuA/HCS_post-cat"/>
</dbReference>
<dbReference type="InterPro" id="IPR036230">
    <property type="entry name" value="LeuA_allosteric_dom_sf"/>
</dbReference>
<dbReference type="InterPro" id="IPR005671">
    <property type="entry name" value="LeuA_bact_synth"/>
</dbReference>
<dbReference type="InterPro" id="IPR000891">
    <property type="entry name" value="PYR_CT"/>
</dbReference>
<dbReference type="NCBIfam" id="TIGR00973">
    <property type="entry name" value="leuA_bact"/>
    <property type="match status" value="1"/>
</dbReference>
<dbReference type="NCBIfam" id="NF002086">
    <property type="entry name" value="PRK00915.1-3"/>
    <property type="match status" value="1"/>
</dbReference>
<dbReference type="NCBIfam" id="NF002087">
    <property type="entry name" value="PRK00915.1-4"/>
    <property type="match status" value="1"/>
</dbReference>
<dbReference type="PANTHER" id="PTHR10277:SF9">
    <property type="entry name" value="2-ISOPROPYLMALATE SYNTHASE 1, CHLOROPLASTIC-RELATED"/>
    <property type="match status" value="1"/>
</dbReference>
<dbReference type="PANTHER" id="PTHR10277">
    <property type="entry name" value="HOMOCITRATE SYNTHASE-RELATED"/>
    <property type="match status" value="1"/>
</dbReference>
<dbReference type="Pfam" id="PF22617">
    <property type="entry name" value="HCS_D2"/>
    <property type="match status" value="1"/>
</dbReference>
<dbReference type="Pfam" id="PF00682">
    <property type="entry name" value="HMGL-like"/>
    <property type="match status" value="1"/>
</dbReference>
<dbReference type="Pfam" id="PF08502">
    <property type="entry name" value="LeuA_dimer"/>
    <property type="match status" value="1"/>
</dbReference>
<dbReference type="SMART" id="SM00917">
    <property type="entry name" value="LeuA_dimer"/>
    <property type="match status" value="1"/>
</dbReference>
<dbReference type="SUPFAM" id="SSF110921">
    <property type="entry name" value="2-isopropylmalate synthase LeuA, allosteric (dimerisation) domain"/>
    <property type="match status" value="1"/>
</dbReference>
<dbReference type="SUPFAM" id="SSF51569">
    <property type="entry name" value="Aldolase"/>
    <property type="match status" value="1"/>
</dbReference>
<dbReference type="PROSITE" id="PS00815">
    <property type="entry name" value="AIPM_HOMOCIT_SYNTH_1"/>
    <property type="match status" value="1"/>
</dbReference>
<dbReference type="PROSITE" id="PS00816">
    <property type="entry name" value="AIPM_HOMOCIT_SYNTH_2"/>
    <property type="match status" value="1"/>
</dbReference>
<dbReference type="PROSITE" id="PS50991">
    <property type="entry name" value="PYR_CT"/>
    <property type="match status" value="1"/>
</dbReference>
<keyword id="KW-0028">Amino-acid biosynthesis</keyword>
<keyword id="KW-0100">Branched-chain amino acid biosynthesis</keyword>
<keyword id="KW-0963">Cytoplasm</keyword>
<keyword id="KW-0432">Leucine biosynthesis</keyword>
<keyword id="KW-0464">Manganese</keyword>
<keyword id="KW-0479">Metal-binding</keyword>
<keyword id="KW-1185">Reference proteome</keyword>
<keyword id="KW-0808">Transferase</keyword>
<protein>
    <recommendedName>
        <fullName evidence="1">2-isopropylmalate synthase</fullName>
        <ecNumber evidence="1">2.3.3.13</ecNumber>
    </recommendedName>
    <alternativeName>
        <fullName evidence="1">Alpha-IPM synthase</fullName>
    </alternativeName>
    <alternativeName>
        <fullName evidence="1">Alpha-isopropylmalate synthase</fullName>
    </alternativeName>
</protein>
<gene>
    <name evidence="1" type="primary">leuA</name>
    <name type="ordered locus">Dtpsy_1948</name>
</gene>
<accession>B9MA32</accession>
<name>LEU1_ACIET</name>
<proteinExistence type="inferred from homology"/>
<evidence type="ECO:0000255" key="1">
    <source>
        <dbReference type="HAMAP-Rule" id="MF_01025"/>
    </source>
</evidence>
<sequence length="512" mass="55456">MTDKLIIFDTTLRDGEQSPGASMTRDEKLRIARQLERLRVDVIEAGFAASSNGDFESVQAIARAVKDSTVCSLARANDRDIARAAEALKEANRARIHTFIATSALHMEKKLRMTPEQVLEQARQAVRFARNLVEDIEFSPEDGYRSDPDFLCRVIETVIAEGATTINVPDTVGYAIPELYGNFIKNLRERIPNSDKAIWSVHCHNDLGMAVANSLAGVKIGGARQVECTINGLGERAGNCSLEEVVMAVKTRRDYFGLDVGIDTQHIVAASRMVSQTTGFVVQPNKAVVGANAFAHASGIHQDGVLKARDTYEIMRAEDVGWSANKIVLGKLSGRNAFKQRLQELGVQLESEGEINVAFAKFKELADRKSEIFDEDILALVSDESVTSEKEQFGFVSLAQHSETGERPEATIVFTVDGKEVRSSAEGNGPVDASMKAIEAHVRSGAEMVLYSVNAISGSTESQGEVTVRLQSAGRVVNGVGADPDIVVASAKAYLSALNKLQSKAERVAAQG</sequence>